<reference key="1">
    <citation type="journal article" date="2006" name="J. Virol.">
        <title>Comparative analysis of 22 coronavirus HKU1 genomes reveals a novel genotype and evidence of natural recombination in coronavirus HKU1.</title>
        <authorList>
            <person name="Woo P.C.Y."/>
            <person name="Lau S.K.P."/>
            <person name="Yip C.C.Y."/>
            <person name="Huang Y."/>
            <person name="Tsoi H.-W."/>
            <person name="Chan K.-H."/>
            <person name="Yuen K.-Y."/>
        </authorList>
    </citation>
    <scope>NUCLEOTIDE SEQUENCE [GENOMIC RNA]</scope>
</reference>
<sequence>MFLIIFILPTTLAVIGDFNCTNSFINDYNKTIPRISEDVVDVSLGLGTYYVLNRVYLNTTLLFTGYFPKSGANFRDLALKGSIYLSTLWYKPPFLSDFNNGIFSKVKNTKLYVNNTLYSEFSTIVIGSVFVNTSYTIVVQPHNGILEITACQYTMCEYPHTVCKSKGSIRNESWHIDSSEPLCLFKKNFTYNVSADWLYFHFYQERGVFYAYYADVGMPTTFLFSLYLGTILSHYYVMPLTCNAISSNTDNETLEYWVTPLSRRQYLLNFDEHGVITNAVDCSSSFLSEIQCKTQSFAPNTGVYDLSGFTVKPVATVYRRIPNLPDCDIDNWLNNVSVPSPLNWERRIFSNCNFNLSTLLRLVHVDSFSCNNLDKSKIFGSCFNSITVDKFAIPNRRRDDLQLGSSGFLQSSNYKIDISSSSCQLYYSLPLVNVTINNFNPSSWNRRYGFGSFNLSSYDVVYSDHCFSVNSDFCPCADPSVVNSCAKSKPPSAICPAGTKYRHCDLDTTLYVKNWCRCSCLPDPISTYSPNTCPQKKVVVGIGEHCPGLGINEEKCGTQLNHSSCFCSPDAFLGWSFDSCISNNRCNIFSNFIFNGINSGTTCSNDLLYSNTEISTGVCVNYDLYGITGQGIFKEVSAAYYNNWQNLLYDSNGNIIGFKDFLTNKTYTILPCYSGRVSAAFYQNSSSPALLYRNLKCSYVLNNISFISQPFYFDSYLGCVLNAVNLTSYSVSSCDLRMGSGFCIDYALPSSRRKRRGISSPYRFVTFEPFNVSFVNDSVETVGGLFEIQIPTNFTIAGHEEFIQTSSPKVTIDCSAFVCSNYAACHDLLSEYGTFCDNINSILNEVNDLLDITQLQVANALMQGVTLSSNLNTNLHSDVDNIDFKSLLGCLGSQCGSSSRSLLEDLLFNKVKLSDVGFVEAYNNCTGGSEIRDLLCVQSFNGIKVLPPILSETQISGYTTAATVAAMFPPWSAAAGVPFSLNVQYRINGLGVTMDVLNKNQKLIANAFNKALLSIQNGFTATNSALAKIQSVVNANAQALNSLLQQLFNKFGAISSSLQEILSRLDNLEAQVQIDRLINGRLTALNAYVSQQLSDITLIKAGASRAIEKVNECVKSQSPRINFCGNGNHILSLVQNAPYGLLFIHFSYKPTSFKTVLVSPGLCLSGDRGIAPKQGYFIKQNDSWMFTGSSYYYPEPISDKNVVFMNSCSVNFTKAPFIYLNNSIPNLSDFEAELSLWFKNHTSIAPNLTFNSHINATFLDLYYEMNVIQESIKSLNSSFINLKEIGTYEMYVKWPWYIWLLIVILFIIFLMILFFICCCTGCGSACFSKCHNCCDEYGGHNDFVIKASHDD</sequence>
<protein>
    <recommendedName>
        <fullName evidence="2">Spike glycoprotein</fullName>
        <shortName evidence="2">S glycoprotein</shortName>
    </recommendedName>
    <alternativeName>
        <fullName evidence="2">E2</fullName>
    </alternativeName>
    <alternativeName>
        <fullName evidence="2">Peplomer protein</fullName>
    </alternativeName>
    <component>
        <recommendedName>
            <fullName evidence="2">Spike protein S1</fullName>
        </recommendedName>
    </component>
    <component>
        <recommendedName>
            <fullName evidence="2">Spike protein S2</fullName>
        </recommendedName>
    </component>
    <component>
        <recommendedName>
            <fullName evidence="2">Spike protein S2'</fullName>
        </recommendedName>
    </component>
</protein>
<feature type="signal peptide" evidence="2">
    <location>
        <begin position="1"/>
        <end position="12"/>
    </location>
</feature>
<feature type="chain" id="PRO_0000297809" description="Spike glycoprotein">
    <location>
        <begin position="13"/>
        <end position="1351"/>
    </location>
</feature>
<feature type="chain" id="PRO_0000297810" description="Spike protein S1">
    <location>
        <begin position="13"/>
        <end position="756"/>
    </location>
</feature>
<feature type="chain" id="PRO_0000297811" description="Spike protein S2">
    <location>
        <begin position="757"/>
        <end position="1351"/>
    </location>
</feature>
<feature type="chain" id="PRO_0000444080" description="Spike protein S2'" evidence="2">
    <location>
        <begin position="901"/>
        <end position="1351"/>
    </location>
</feature>
<feature type="topological domain" description="Extracellular" evidence="2">
    <location>
        <begin position="13"/>
        <end position="1295"/>
    </location>
</feature>
<feature type="transmembrane region" description="Helical" evidence="2">
    <location>
        <begin position="1296"/>
        <end position="1316"/>
    </location>
</feature>
<feature type="topological domain" description="Cytoplasmic" evidence="2">
    <location>
        <begin position="1317"/>
        <end position="1351"/>
    </location>
</feature>
<feature type="domain" description="BetaCoV S1-NTD" evidence="4">
    <location>
        <begin position="14"/>
        <end position="294"/>
    </location>
</feature>
<feature type="domain" description="BetaCoV S1-CTD" evidence="3">
    <location>
        <begin position="325"/>
        <end position="605"/>
    </location>
</feature>
<feature type="region of interest" description="Fusion peptide 1" evidence="2">
    <location>
        <begin position="901"/>
        <end position="922"/>
    </location>
</feature>
<feature type="region of interest" description="Fusion peptide 2" evidence="2">
    <location>
        <begin position="920"/>
        <end position="940"/>
    </location>
</feature>
<feature type="region of interest" description="Heptad repeat 1" evidence="2">
    <location>
        <begin position="1001"/>
        <end position="1051"/>
    </location>
</feature>
<feature type="region of interest" description="Heptad repeat 2" evidence="2">
    <location>
        <begin position="1245"/>
        <end position="1284"/>
    </location>
</feature>
<feature type="coiled-coil region" evidence="2">
    <location>
        <begin position="1030"/>
        <end position="1074"/>
    </location>
</feature>
<feature type="coiled-coil region" evidence="2">
    <location>
        <begin position="1257"/>
        <end position="1285"/>
    </location>
</feature>
<feature type="short sequence motif" description="KxHxx" evidence="2">
    <location>
        <begin position="1347"/>
        <end position="1351"/>
    </location>
</feature>
<feature type="site" description="Cleavage; by host" evidence="1">
    <location>
        <begin position="756"/>
        <end position="757"/>
    </location>
</feature>
<feature type="site" description="Cleavage" evidence="2">
    <location>
        <begin position="900"/>
        <end position="901"/>
    </location>
</feature>
<feature type="glycosylation site" description="N-linked (GlcNAc...) asparagine; by host" evidence="2">
    <location>
        <position position="19"/>
    </location>
</feature>
<feature type="glycosylation site" description="N-linked (GlcNAc...) asparagine; by host" evidence="2">
    <location>
        <position position="29"/>
    </location>
</feature>
<feature type="glycosylation site" description="N-linked (GlcNAc...) asparagine; by host" evidence="2">
    <location>
        <position position="58"/>
    </location>
</feature>
<feature type="glycosylation site" description="N-linked (GlcNAc...) asparagine; by host" evidence="2">
    <location>
        <position position="114"/>
    </location>
</feature>
<feature type="glycosylation site" description="N-linked (GlcNAc...) asparagine; by host" evidence="2">
    <location>
        <position position="132"/>
    </location>
</feature>
<feature type="glycosylation site" description="N-linked (GlcNAc...) asparagine; by host" evidence="2">
    <location>
        <position position="171"/>
    </location>
</feature>
<feature type="glycosylation site" description="N-linked (GlcNAc...) asparagine; by host" evidence="2">
    <location>
        <position position="188"/>
    </location>
</feature>
<feature type="glycosylation site" description="N-linked (GlcNAc...) asparagine; by host" evidence="2">
    <location>
        <position position="192"/>
    </location>
</feature>
<feature type="glycosylation site" description="N-linked (GlcNAc...) asparagine; by host" evidence="2">
    <location>
        <position position="251"/>
    </location>
</feature>
<feature type="glycosylation site" description="N-linked (GlcNAc...) asparagine; by host" evidence="2">
    <location>
        <position position="335"/>
    </location>
</feature>
<feature type="glycosylation site" description="N-linked (GlcNAc...) asparagine; by host" evidence="2">
    <location>
        <position position="355"/>
    </location>
</feature>
<feature type="glycosylation site" description="N-linked (GlcNAc...) asparagine; by host" evidence="2">
    <location>
        <position position="433"/>
    </location>
</feature>
<feature type="glycosylation site" description="N-linked (GlcNAc...) asparagine; by host" evidence="2">
    <location>
        <position position="454"/>
    </location>
</feature>
<feature type="glycosylation site" description="N-linked (GlcNAc...) asparagine; by host" evidence="2">
    <location>
        <position position="561"/>
    </location>
</feature>
<feature type="glycosylation site" description="N-linked (GlcNAc...) asparagine; by host" evidence="2">
    <location>
        <position position="664"/>
    </location>
</feature>
<feature type="glycosylation site" description="N-linked (GlcNAc...) asparagine; by host" evidence="2">
    <location>
        <position position="684"/>
    </location>
</feature>
<feature type="glycosylation site" description="N-linked (GlcNAc...) asparagine; by host" evidence="2">
    <location>
        <position position="703"/>
    </location>
</feature>
<feature type="glycosylation site" description="N-linked (GlcNAc...) asparagine; by host" evidence="2">
    <location>
        <position position="725"/>
    </location>
</feature>
<feature type="glycosylation site" description="N-linked (GlcNAc...) asparagine; by host" evidence="2">
    <location>
        <position position="771"/>
    </location>
</feature>
<feature type="glycosylation site" description="N-linked (GlcNAc...) asparagine; by host" evidence="2">
    <location>
        <position position="776"/>
    </location>
</feature>
<feature type="glycosylation site" description="N-linked (GlcNAc...) asparagine; by host" evidence="2">
    <location>
        <position position="793"/>
    </location>
</feature>
<feature type="glycosylation site" description="N-linked (GlcNAc...) asparagine; by host" evidence="2">
    <location>
        <position position="924"/>
    </location>
</feature>
<feature type="glycosylation site" description="N-linked (GlcNAc...) asparagine; by host" evidence="2">
    <location>
        <position position="1181"/>
    </location>
</feature>
<feature type="glycosylation site" description="N-linked (GlcNAc...) asparagine; by host" evidence="2">
    <location>
        <position position="1211"/>
    </location>
</feature>
<feature type="glycosylation site" description="N-linked (GlcNAc...) asparagine; by host" evidence="2">
    <location>
        <position position="1221"/>
    </location>
</feature>
<feature type="glycosylation site" description="N-linked (GlcNAc...) asparagine; by host" evidence="2">
    <location>
        <position position="1226"/>
    </location>
</feature>
<feature type="glycosylation site" description="N-linked (GlcNAc...) asparagine; by host" evidence="2">
    <location>
        <position position="1240"/>
    </location>
</feature>
<feature type="glycosylation site" description="N-linked (GlcNAc...) asparagine; by host" evidence="2">
    <location>
        <position position="1247"/>
    </location>
</feature>
<feature type="glycosylation site" description="N-linked (GlcNAc...) asparagine; by host" evidence="2">
    <location>
        <position position="1255"/>
    </location>
</feature>
<feature type="glycosylation site" description="N-linked (GlcNAc...) asparagine; by host" evidence="2">
    <location>
        <position position="1276"/>
    </location>
</feature>
<feature type="disulfide bond" evidence="4">
    <location>
        <begin position="20"/>
        <end position="156"/>
    </location>
</feature>
<feature type="disulfide bond" evidence="4">
    <location>
        <begin position="151"/>
        <end position="183"/>
    </location>
</feature>
<feature type="disulfide bond" evidence="4">
    <location>
        <begin position="163"/>
        <end position="242"/>
    </location>
</feature>
<feature type="disulfide bond" evidence="4">
    <location>
        <begin position="282"/>
        <end position="292"/>
    </location>
</feature>
<feature type="disulfide bond" evidence="3">
    <location>
        <begin position="327"/>
        <end position="352"/>
    </location>
</feature>
<feature type="disulfide bond" evidence="3">
    <location>
        <begin position="370"/>
        <end position="423"/>
    </location>
</feature>
<feature type="disulfide bond" evidence="3">
    <location>
        <begin position="382"/>
        <end position="603"/>
    </location>
</feature>
<feature type="disulfide bond" evidence="2">
    <location>
        <begin position="925"/>
        <end position="936"/>
    </location>
</feature>
<feature type="strand" evidence="8">
    <location>
        <begin position="16"/>
        <end position="18"/>
    </location>
</feature>
<feature type="strand" evidence="9">
    <location>
        <begin position="23"/>
        <end position="26"/>
    </location>
</feature>
<feature type="strand" evidence="9">
    <location>
        <begin position="35"/>
        <end position="39"/>
    </location>
</feature>
<feature type="strand" evidence="9">
    <location>
        <begin position="43"/>
        <end position="45"/>
    </location>
</feature>
<feature type="strand" evidence="9">
    <location>
        <begin position="52"/>
        <end position="55"/>
    </location>
</feature>
<feature type="strand" evidence="10">
    <location>
        <begin position="60"/>
        <end position="68"/>
    </location>
</feature>
<feature type="strand" evidence="9">
    <location>
        <begin position="73"/>
        <end position="76"/>
    </location>
</feature>
<feature type="strand" evidence="10">
    <location>
        <begin position="80"/>
        <end position="83"/>
    </location>
</feature>
<feature type="helix" evidence="10">
    <location>
        <begin position="87"/>
        <end position="90"/>
    </location>
</feature>
<feature type="strand" evidence="10">
    <location>
        <begin position="94"/>
        <end position="97"/>
    </location>
</feature>
<feature type="strand" evidence="10">
    <location>
        <begin position="99"/>
        <end position="107"/>
    </location>
</feature>
<feature type="strand" evidence="11">
    <location>
        <begin position="109"/>
        <end position="111"/>
    </location>
</feature>
<feature type="strand" evidence="10">
    <location>
        <begin position="113"/>
        <end position="115"/>
    </location>
</feature>
<feature type="strand" evidence="9">
    <location>
        <begin position="117"/>
        <end position="120"/>
    </location>
</feature>
<feature type="strand" evidence="10">
    <location>
        <begin position="123"/>
        <end position="129"/>
    </location>
</feature>
<feature type="strand" evidence="7">
    <location>
        <begin position="131"/>
        <end position="134"/>
    </location>
</feature>
<feature type="strand" evidence="10">
    <location>
        <begin position="136"/>
        <end position="142"/>
    </location>
</feature>
<feature type="strand" evidence="10">
    <location>
        <begin position="145"/>
        <end position="151"/>
    </location>
</feature>
<feature type="strand" evidence="9">
    <location>
        <begin position="155"/>
        <end position="162"/>
    </location>
</feature>
<feature type="strand" evidence="10">
    <location>
        <begin position="164"/>
        <end position="166"/>
    </location>
</feature>
<feature type="strand" evidence="9">
    <location>
        <begin position="173"/>
        <end position="175"/>
    </location>
</feature>
<feature type="strand" evidence="10">
    <location>
        <begin position="184"/>
        <end position="190"/>
    </location>
</feature>
<feature type="strand" evidence="10">
    <location>
        <begin position="196"/>
        <end position="205"/>
    </location>
</feature>
<feature type="strand" evidence="10">
    <location>
        <begin position="208"/>
        <end position="227"/>
    </location>
</feature>
<feature type="strand" evidence="10">
    <location>
        <begin position="234"/>
        <end position="238"/>
    </location>
</feature>
<feature type="strand" evidence="10">
    <location>
        <begin position="243"/>
        <end position="246"/>
    </location>
</feature>
<feature type="turn" evidence="10">
    <location>
        <begin position="247"/>
        <end position="250"/>
    </location>
</feature>
<feature type="strand" evidence="10">
    <location>
        <begin position="256"/>
        <end position="270"/>
    </location>
</feature>
<feature type="strand" evidence="6">
    <location>
        <begin position="272"/>
        <end position="274"/>
    </location>
</feature>
<feature type="strand" evidence="10">
    <location>
        <begin position="276"/>
        <end position="281"/>
    </location>
</feature>
<feature type="strand" evidence="7">
    <location>
        <begin position="282"/>
        <end position="285"/>
    </location>
</feature>
<feature type="helix" evidence="10">
    <location>
        <begin position="286"/>
        <end position="294"/>
    </location>
</feature>
<feature type="strand" evidence="10">
    <location>
        <begin position="296"/>
        <end position="298"/>
    </location>
</feature>
<feature type="strand" evidence="10">
    <location>
        <begin position="301"/>
        <end position="305"/>
    </location>
</feature>
<feature type="strand" evidence="10">
    <location>
        <begin position="316"/>
        <end position="319"/>
    </location>
</feature>
<feature type="helix" evidence="10">
    <location>
        <begin position="329"/>
        <end position="333"/>
    </location>
</feature>
<feature type="strand" evidence="10">
    <location>
        <begin position="336"/>
        <end position="339"/>
    </location>
</feature>
<feature type="helix" evidence="10">
    <location>
        <begin position="341"/>
        <end position="343"/>
    </location>
</feature>
<feature type="strand" evidence="10">
    <location>
        <begin position="345"/>
        <end position="349"/>
    </location>
</feature>
<feature type="helix" evidence="10">
    <location>
        <begin position="356"/>
        <end position="361"/>
    </location>
</feature>
<feature type="turn" evidence="10">
    <location>
        <begin position="362"/>
        <end position="364"/>
    </location>
</feature>
<feature type="strand" evidence="10">
    <location>
        <begin position="365"/>
        <end position="373"/>
    </location>
</feature>
<feature type="helix" evidence="10">
    <location>
        <begin position="375"/>
        <end position="377"/>
    </location>
</feature>
<feature type="strand" evidence="10">
    <location>
        <begin position="378"/>
        <end position="380"/>
    </location>
</feature>
<feature type="strand" evidence="10">
    <location>
        <begin position="384"/>
        <end position="392"/>
    </location>
</feature>
<feature type="strand" evidence="9">
    <location>
        <begin position="395"/>
        <end position="397"/>
    </location>
</feature>
<feature type="helix" evidence="10">
    <location>
        <begin position="398"/>
        <end position="401"/>
    </location>
</feature>
<feature type="strand" evidence="9">
    <location>
        <begin position="402"/>
        <end position="404"/>
    </location>
</feature>
<feature type="helix" evidence="10">
    <location>
        <begin position="409"/>
        <end position="412"/>
    </location>
</feature>
<feature type="strand" evidence="10">
    <location>
        <begin position="418"/>
        <end position="420"/>
    </location>
</feature>
<feature type="strand" evidence="10">
    <location>
        <begin position="422"/>
        <end position="430"/>
    </location>
</feature>
<feature type="turn" evidence="11">
    <location>
        <begin position="431"/>
        <end position="433"/>
    </location>
</feature>
<feature type="strand" evidence="10">
    <location>
        <begin position="435"/>
        <end position="437"/>
    </location>
</feature>
<feature type="turn" evidence="8">
    <location>
        <begin position="443"/>
        <end position="445"/>
    </location>
</feature>
<feature type="helix" evidence="10">
    <location>
        <begin position="446"/>
        <end position="448"/>
    </location>
</feature>
<feature type="strand" evidence="10">
    <location>
        <begin position="459"/>
        <end position="464"/>
    </location>
</feature>
<feature type="strand" evidence="10">
    <location>
        <begin position="466"/>
        <end position="468"/>
    </location>
</feature>
<feature type="strand" evidence="11">
    <location>
        <begin position="471"/>
        <end position="473"/>
    </location>
</feature>
<feature type="strand" evidence="11">
    <location>
        <begin position="475"/>
        <end position="477"/>
    </location>
</feature>
<feature type="helix" evidence="10">
    <location>
        <begin position="479"/>
        <end position="482"/>
    </location>
</feature>
<feature type="strand" evidence="6">
    <location>
        <begin position="485"/>
        <end position="487"/>
    </location>
</feature>
<feature type="strand" evidence="6">
    <location>
        <begin position="497"/>
        <end position="499"/>
    </location>
</feature>
<feature type="strand" evidence="9">
    <location>
        <begin position="504"/>
        <end position="507"/>
    </location>
</feature>
<feature type="strand" evidence="9">
    <location>
        <begin position="509"/>
        <end position="511"/>
    </location>
</feature>
<feature type="strand" evidence="10">
    <location>
        <begin position="517"/>
        <end position="520"/>
    </location>
</feature>
<feature type="strand" evidence="10">
    <location>
        <begin position="524"/>
        <end position="526"/>
    </location>
</feature>
<feature type="turn" evidence="10">
    <location>
        <begin position="530"/>
        <end position="532"/>
    </location>
</feature>
<feature type="strand" evidence="10">
    <location>
        <begin position="536"/>
        <end position="538"/>
    </location>
</feature>
<feature type="turn" evidence="10">
    <location>
        <begin position="553"/>
        <end position="555"/>
    </location>
</feature>
<feature type="strand" evidence="10">
    <location>
        <begin position="560"/>
        <end position="562"/>
    </location>
</feature>
<feature type="strand" evidence="10">
    <location>
        <begin position="564"/>
        <end position="567"/>
    </location>
</feature>
<feature type="helix" evidence="9">
    <location>
        <begin position="569"/>
        <end position="571"/>
    </location>
</feature>
<feature type="strand" evidence="10">
    <location>
        <begin position="572"/>
        <end position="579"/>
    </location>
</feature>
<feature type="strand" evidence="10">
    <location>
        <begin position="585"/>
        <end position="596"/>
    </location>
</feature>
<feature type="strand" evidence="9">
    <location>
        <begin position="600"/>
        <end position="602"/>
    </location>
</feature>
<feature type="turn" evidence="9">
    <location>
        <begin position="606"/>
        <end position="609"/>
    </location>
</feature>
<feature type="strand" evidence="10">
    <location>
        <begin position="616"/>
        <end position="618"/>
    </location>
</feature>
<feature type="strand" evidence="10">
    <location>
        <begin position="620"/>
        <end position="624"/>
    </location>
</feature>
<feature type="strand" evidence="10">
    <location>
        <begin position="627"/>
        <end position="633"/>
    </location>
</feature>
<feature type="strand" evidence="10">
    <location>
        <begin position="647"/>
        <end position="649"/>
    </location>
</feature>
<feature type="strand" evidence="6">
    <location>
        <begin position="651"/>
        <end position="653"/>
    </location>
</feature>
<feature type="strand" evidence="10">
    <location>
        <begin position="655"/>
        <end position="659"/>
    </location>
</feature>
<feature type="turn" evidence="10">
    <location>
        <begin position="661"/>
        <end position="663"/>
    </location>
</feature>
<feature type="strand" evidence="9">
    <location>
        <begin position="666"/>
        <end position="668"/>
    </location>
</feature>
<feature type="strand" evidence="10">
    <location>
        <begin position="678"/>
        <end position="681"/>
    </location>
</feature>
<feature type="strand" evidence="10">
    <location>
        <begin position="689"/>
        <end position="693"/>
    </location>
</feature>
<feature type="helix" evidence="10">
    <location>
        <begin position="697"/>
        <end position="703"/>
    </location>
</feature>
<feature type="strand" evidence="10">
    <location>
        <begin position="712"/>
        <end position="714"/>
    </location>
</feature>
<feature type="strand" evidence="10">
    <location>
        <begin position="716"/>
        <end position="722"/>
    </location>
</feature>
<feature type="strand" evidence="10">
    <location>
        <begin position="724"/>
        <end position="732"/>
    </location>
</feature>
<feature type="strand" evidence="10">
    <location>
        <begin position="737"/>
        <end position="739"/>
    </location>
</feature>
<feature type="strand" evidence="10">
    <location>
        <begin position="742"/>
        <end position="746"/>
    </location>
</feature>
<feature type="strand" evidence="10">
    <location>
        <begin position="761"/>
        <end position="767"/>
    </location>
</feature>
<feature type="strand" evidence="10">
    <location>
        <begin position="773"/>
        <end position="775"/>
    </location>
</feature>
<feature type="strand" evidence="6">
    <location>
        <begin position="782"/>
        <end position="784"/>
    </location>
</feature>
<feature type="strand" evidence="10">
    <location>
        <begin position="785"/>
        <end position="804"/>
    </location>
</feature>
<feature type="strand" evidence="10">
    <location>
        <begin position="809"/>
        <end position="812"/>
    </location>
</feature>
<feature type="helix" evidence="10">
    <location>
        <begin position="814"/>
        <end position="818"/>
    </location>
</feature>
<feature type="strand" evidence="6">
    <location>
        <begin position="819"/>
        <end position="821"/>
    </location>
</feature>
<feature type="helix" evidence="10">
    <location>
        <begin position="823"/>
        <end position="829"/>
    </location>
</feature>
<feature type="helix" evidence="10">
    <location>
        <begin position="830"/>
        <end position="832"/>
    </location>
</feature>
<feature type="helix" evidence="10">
    <location>
        <begin position="835"/>
        <end position="861"/>
    </location>
</feature>
<feature type="strand" evidence="10">
    <location>
        <begin position="866"/>
        <end position="868"/>
    </location>
</feature>
<feature type="helix" evidence="5">
    <location>
        <begin position="869"/>
        <end position="871"/>
    </location>
</feature>
<feature type="strand" evidence="11">
    <location>
        <begin position="873"/>
        <end position="875"/>
    </location>
</feature>
<feature type="strand" evidence="8">
    <location>
        <begin position="878"/>
        <end position="881"/>
    </location>
</feature>
<feature type="helix" evidence="10">
    <location>
        <begin position="885"/>
        <end position="887"/>
    </location>
</feature>
<feature type="strand" evidence="10">
    <location>
        <begin position="892"/>
        <end position="894"/>
    </location>
</feature>
<feature type="helix" evidence="10">
    <location>
        <begin position="902"/>
        <end position="908"/>
    </location>
</feature>
<feature type="strand" evidence="6">
    <location>
        <begin position="912"/>
        <end position="914"/>
    </location>
</feature>
<feature type="helix" evidence="10">
    <location>
        <begin position="915"/>
        <end position="923"/>
    </location>
</feature>
<feature type="strand" evidence="10">
    <location>
        <begin position="926"/>
        <end position="929"/>
    </location>
</feature>
<feature type="helix" evidence="10">
    <location>
        <begin position="934"/>
        <end position="939"/>
    </location>
</feature>
<feature type="turn" evidence="10">
    <location>
        <begin position="940"/>
        <end position="942"/>
    </location>
</feature>
<feature type="strand" evidence="10">
    <location>
        <begin position="943"/>
        <end position="946"/>
    </location>
</feature>
<feature type="helix" evidence="10">
    <location>
        <begin position="952"/>
        <end position="964"/>
    </location>
</feature>
<feature type="turn" evidence="10">
    <location>
        <begin position="965"/>
        <end position="967"/>
    </location>
</feature>
<feature type="strand" evidence="11">
    <location>
        <begin position="968"/>
        <end position="970"/>
    </location>
</feature>
<feature type="turn" evidence="10">
    <location>
        <begin position="972"/>
        <end position="976"/>
    </location>
</feature>
<feature type="helix" evidence="10">
    <location>
        <begin position="979"/>
        <end position="988"/>
    </location>
</feature>
<feature type="turn" evidence="10">
    <location>
        <begin position="989"/>
        <end position="991"/>
    </location>
</feature>
<feature type="helix" evidence="10">
    <location>
        <begin position="994"/>
        <end position="999"/>
    </location>
</feature>
<feature type="helix" evidence="10">
    <location>
        <begin position="1002"/>
        <end position="1016"/>
    </location>
</feature>
<feature type="turn" evidence="10">
    <location>
        <begin position="1017"/>
        <end position="1020"/>
    </location>
</feature>
<feature type="helix" evidence="10">
    <location>
        <begin position="1024"/>
        <end position="1045"/>
    </location>
</feature>
<feature type="helix" evidence="10">
    <location>
        <begin position="1046"/>
        <end position="1048"/>
    </location>
</feature>
<feature type="helix" evidence="10">
    <location>
        <begin position="1058"/>
        <end position="1064"/>
    </location>
</feature>
<feature type="helix" evidence="10">
    <location>
        <begin position="1067"/>
        <end position="1113"/>
    </location>
</feature>
<feature type="strand" evidence="10">
    <location>
        <begin position="1121"/>
        <end position="1127"/>
    </location>
</feature>
<feature type="strand" evidence="10">
    <location>
        <begin position="1129"/>
        <end position="1137"/>
    </location>
</feature>
<feature type="strand" evidence="10">
    <location>
        <begin position="1140"/>
        <end position="1160"/>
    </location>
</feature>
<feature type="strand" evidence="10">
    <location>
        <begin position="1162"/>
        <end position="1164"/>
    </location>
</feature>
<feature type="turn" evidence="10">
    <location>
        <begin position="1165"/>
        <end position="1167"/>
    </location>
</feature>
<feature type="strand" evidence="10">
    <location>
        <begin position="1168"/>
        <end position="1179"/>
    </location>
</feature>
<feature type="strand" evidence="10">
    <location>
        <begin position="1181"/>
        <end position="1191"/>
    </location>
</feature>
<feature type="turn" evidence="10">
    <location>
        <begin position="1199"/>
        <end position="1201"/>
    </location>
</feature>
<feature type="strand" evidence="10">
    <location>
        <begin position="1202"/>
        <end position="1207"/>
    </location>
</feature>
<feature type="strand" evidence="10">
    <location>
        <begin position="1212"/>
        <end position="1214"/>
    </location>
</feature>
<keyword id="KW-0002">3D-structure</keyword>
<keyword id="KW-0175">Coiled coil</keyword>
<keyword id="KW-1015">Disulfide bond</keyword>
<keyword id="KW-1170">Fusion of virus membrane with host endosomal membrane</keyword>
<keyword id="KW-1168">Fusion of virus membrane with host membrane</keyword>
<keyword id="KW-0325">Glycoprotein</keyword>
<keyword id="KW-1032">Host cell membrane</keyword>
<keyword id="KW-1043">Host membrane</keyword>
<keyword id="KW-0945">Host-virus interaction</keyword>
<keyword id="KW-0449">Lipoprotein</keyword>
<keyword id="KW-0472">Membrane</keyword>
<keyword id="KW-0564">Palmitate</keyword>
<keyword id="KW-1185">Reference proteome</keyword>
<keyword id="KW-0732">Signal</keyword>
<keyword id="KW-0812">Transmembrane</keyword>
<keyword id="KW-1133">Transmembrane helix</keyword>
<keyword id="KW-1161">Viral attachment to host cell</keyword>
<keyword id="KW-0261">Viral envelope protein</keyword>
<keyword id="KW-1162">Viral penetration into host cytoplasm</keyword>
<keyword id="KW-0946">Virion</keyword>
<keyword id="KW-0843">Virulence</keyword>
<keyword id="KW-1160">Virus entry into host cell</keyword>
<dbReference type="EMBL" id="DQ339101">
    <property type="protein sequence ID" value="ABC70719.1"/>
    <property type="molecule type" value="Genomic_RNA"/>
</dbReference>
<dbReference type="PDB" id="5I08">
    <property type="method" value="EM"/>
    <property type="resolution" value="4.04 A"/>
    <property type="chains" value="A/B/C=14-1276"/>
</dbReference>
<dbReference type="PDB" id="8S0M">
    <property type="method" value="X-ray"/>
    <property type="resolution" value="3.55 A"/>
    <property type="chains" value="A/D=307-672"/>
</dbReference>
<dbReference type="PDB" id="8Y87">
    <property type="method" value="EM"/>
    <property type="resolution" value="3.26 A"/>
    <property type="chains" value="A/B/C=14-1276"/>
</dbReference>
<dbReference type="PDB" id="8Y88">
    <property type="method" value="EM"/>
    <property type="resolution" value="3.03 A"/>
    <property type="chains" value="A/B/C=14-1276"/>
</dbReference>
<dbReference type="PDB" id="8Y89">
    <property type="method" value="EM"/>
    <property type="resolution" value="3.32 A"/>
    <property type="chains" value="A/B/C=14-1276"/>
</dbReference>
<dbReference type="PDB" id="8Y8A">
    <property type="method" value="EM"/>
    <property type="resolution" value="3.19 A"/>
    <property type="chains" value="A/B/C=14-1276"/>
</dbReference>
<dbReference type="PDB" id="8Y8B">
    <property type="method" value="EM"/>
    <property type="resolution" value="3.01 A"/>
    <property type="chains" value="A/B=14-1276"/>
</dbReference>
<dbReference type="PDB" id="8Y8C">
    <property type="method" value="EM"/>
    <property type="resolution" value="2.95 A"/>
    <property type="chains" value="A/B/C=14-1276"/>
</dbReference>
<dbReference type="PDB" id="8Y8D">
    <property type="method" value="EM"/>
    <property type="resolution" value="3.41 A"/>
    <property type="chains" value="A/B/C=14-1276"/>
</dbReference>
<dbReference type="PDB" id="8Y8E">
    <property type="method" value="EM"/>
    <property type="resolution" value="3.62 A"/>
    <property type="chains" value="A/B/C=14-1276"/>
</dbReference>
<dbReference type="PDB" id="8Y8F">
    <property type="method" value="EM"/>
    <property type="resolution" value="3.07 A"/>
    <property type="chains" value="A/B/C=14-1276"/>
</dbReference>
<dbReference type="PDB" id="8Y8G">
    <property type="method" value="EM"/>
    <property type="resolution" value="3.23 A"/>
    <property type="chains" value="A/B/C=14-1276"/>
</dbReference>
<dbReference type="PDB" id="8Y8H">
    <property type="method" value="EM"/>
    <property type="resolution" value="3.65 A"/>
    <property type="chains" value="A/B/C=14-1276"/>
</dbReference>
<dbReference type="PDB" id="8Y8I">
    <property type="method" value="EM"/>
    <property type="resolution" value="3.58 A"/>
    <property type="chains" value="A/B/C=14-1276"/>
</dbReference>
<dbReference type="PDB" id="8Y8J">
    <property type="method" value="EM"/>
    <property type="resolution" value="3.57 A"/>
    <property type="chains" value="A/B=14-1276"/>
</dbReference>
<dbReference type="PDB" id="8YQQ">
    <property type="method" value="EM"/>
    <property type="resolution" value="3.95 A"/>
    <property type="chains" value="A=323-607"/>
</dbReference>
<dbReference type="PDBsum" id="5I08"/>
<dbReference type="PDBsum" id="8S0M"/>
<dbReference type="PDBsum" id="8Y87"/>
<dbReference type="PDBsum" id="8Y88"/>
<dbReference type="PDBsum" id="8Y89"/>
<dbReference type="PDBsum" id="8Y8A"/>
<dbReference type="PDBsum" id="8Y8B"/>
<dbReference type="PDBsum" id="8Y8C"/>
<dbReference type="PDBsum" id="8Y8D"/>
<dbReference type="PDBsum" id="8Y8E"/>
<dbReference type="PDBsum" id="8Y8F"/>
<dbReference type="PDBsum" id="8Y8G"/>
<dbReference type="PDBsum" id="8Y8H"/>
<dbReference type="PDBsum" id="8Y8I"/>
<dbReference type="PDBsum" id="8Y8J"/>
<dbReference type="PDBsum" id="8YQQ"/>
<dbReference type="EMDB" id="EMD-39036"/>
<dbReference type="EMDB" id="EMD-39037"/>
<dbReference type="EMDB" id="EMD-39038"/>
<dbReference type="EMDB" id="EMD-39039"/>
<dbReference type="EMDB" id="EMD-39040"/>
<dbReference type="EMDB" id="EMD-39041"/>
<dbReference type="EMDB" id="EMD-39042"/>
<dbReference type="EMDB" id="EMD-39043"/>
<dbReference type="EMDB" id="EMD-39044"/>
<dbReference type="EMDB" id="EMD-39045"/>
<dbReference type="EMDB" id="EMD-39046"/>
<dbReference type="EMDB" id="EMD-39047"/>
<dbReference type="EMDB" id="EMD-39048"/>
<dbReference type="EMDB" id="EMD-39502"/>
<dbReference type="EMDB" id="EMD-8066"/>
<dbReference type="EMDB" id="EMD-8067"/>
<dbReference type="EMDB" id="EMD-8068"/>
<dbReference type="SMR" id="Q0ZME7"/>
<dbReference type="DIP" id="DIP-61948N"/>
<dbReference type="UniLectin" id="Q0ZME7"/>
<dbReference type="GlyCosmos" id="Q0ZME7">
    <property type="glycosylation" value="30 sites, No reported glycans"/>
</dbReference>
<dbReference type="ABCD" id="Q0ZME7">
    <property type="antibodies" value="17 sequenced antibodies"/>
</dbReference>
<dbReference type="Proteomes" id="UP000001985">
    <property type="component" value="Genome"/>
</dbReference>
<dbReference type="GO" id="GO:0044173">
    <property type="term" value="C:host cell endoplasmic reticulum-Golgi intermediate compartment membrane"/>
    <property type="evidence" value="ECO:0007669"/>
    <property type="project" value="UniProtKB-SubCell"/>
</dbReference>
<dbReference type="GO" id="GO:0020002">
    <property type="term" value="C:host cell plasma membrane"/>
    <property type="evidence" value="ECO:0007669"/>
    <property type="project" value="UniProtKB-SubCell"/>
</dbReference>
<dbReference type="GO" id="GO:0016020">
    <property type="term" value="C:membrane"/>
    <property type="evidence" value="ECO:0007669"/>
    <property type="project" value="UniProtKB-UniRule"/>
</dbReference>
<dbReference type="GO" id="GO:0019031">
    <property type="term" value="C:viral envelope"/>
    <property type="evidence" value="ECO:0007669"/>
    <property type="project" value="UniProtKB-UniRule"/>
</dbReference>
<dbReference type="GO" id="GO:0055036">
    <property type="term" value="C:virion membrane"/>
    <property type="evidence" value="ECO:0007669"/>
    <property type="project" value="UniProtKB-SubCell"/>
</dbReference>
<dbReference type="GO" id="GO:0042802">
    <property type="term" value="F:identical protein binding"/>
    <property type="evidence" value="ECO:0000353"/>
    <property type="project" value="IntAct"/>
</dbReference>
<dbReference type="GO" id="GO:0075509">
    <property type="term" value="P:endocytosis involved in viral entry into host cell"/>
    <property type="evidence" value="ECO:0007669"/>
    <property type="project" value="UniProtKB-UniRule"/>
</dbReference>
<dbReference type="GO" id="GO:0039654">
    <property type="term" value="P:fusion of virus membrane with host endosome membrane"/>
    <property type="evidence" value="ECO:0007669"/>
    <property type="project" value="UniProtKB-UniRule"/>
</dbReference>
<dbReference type="GO" id="GO:0019064">
    <property type="term" value="P:fusion of virus membrane with host plasma membrane"/>
    <property type="evidence" value="ECO:0007669"/>
    <property type="project" value="UniProtKB-UniRule"/>
</dbReference>
<dbReference type="GO" id="GO:0046813">
    <property type="term" value="P:receptor-mediated virion attachment to host cell"/>
    <property type="evidence" value="ECO:0007669"/>
    <property type="project" value="UniProtKB-UniRule"/>
</dbReference>
<dbReference type="CDD" id="cd22380">
    <property type="entry name" value="HKU1-CoV-like_Spike_SD1-2_S1-S2_S2"/>
    <property type="match status" value="1"/>
</dbReference>
<dbReference type="CDD" id="cd21482">
    <property type="entry name" value="HKU1_N5-like_CoV_Spike_S1_RBD"/>
    <property type="match status" value="1"/>
</dbReference>
<dbReference type="CDD" id="cd21625">
    <property type="entry name" value="MHV-like_Spike_S1_NTD"/>
    <property type="match status" value="1"/>
</dbReference>
<dbReference type="FunFam" id="1.20.5.300:FF:000003">
    <property type="entry name" value="Spike glycoprotein"/>
    <property type="match status" value="1"/>
</dbReference>
<dbReference type="FunFam" id="1.20.5.300:FF:000006">
    <property type="entry name" value="Spike glycoprotein"/>
    <property type="match status" value="1"/>
</dbReference>
<dbReference type="FunFam" id="2.60.120.960:FF:000002">
    <property type="entry name" value="Spike glycoprotein"/>
    <property type="match status" value="1"/>
</dbReference>
<dbReference type="Gene3D" id="1.20.5.300">
    <property type="match status" value="2"/>
</dbReference>
<dbReference type="Gene3D" id="3.30.70.1840">
    <property type="match status" value="1"/>
</dbReference>
<dbReference type="Gene3D" id="2.60.120.960">
    <property type="entry name" value="Spike glycoprotein, N-terminal domain"/>
    <property type="match status" value="1"/>
</dbReference>
<dbReference type="HAMAP" id="MF_04099">
    <property type="entry name" value="BETA_CORONA_SPIKE"/>
    <property type="match status" value="1"/>
</dbReference>
<dbReference type="InterPro" id="IPR032500">
    <property type="entry name" value="bCoV_S1_N"/>
</dbReference>
<dbReference type="InterPro" id="IPR042578">
    <property type="entry name" value="BETA_CORONA_SPIKE"/>
</dbReference>
<dbReference type="InterPro" id="IPR043607">
    <property type="entry name" value="CoV_S1_C"/>
</dbReference>
<dbReference type="InterPro" id="IPR043473">
    <property type="entry name" value="S2_sf_CoV"/>
</dbReference>
<dbReference type="InterPro" id="IPR043002">
    <property type="entry name" value="Spike_N_sf"/>
</dbReference>
<dbReference type="InterPro" id="IPR044339">
    <property type="entry name" value="Spike_S1_NTD_MHV-like"/>
</dbReference>
<dbReference type="InterPro" id="IPR018548">
    <property type="entry name" value="Spike_S1_RBD_bCoV"/>
</dbReference>
<dbReference type="InterPro" id="IPR044375">
    <property type="entry name" value="Spike_S1_RBD_CoV_HKU1-like"/>
</dbReference>
<dbReference type="InterPro" id="IPR036326">
    <property type="entry name" value="Spike_S1_RBD_sf_bCoV"/>
</dbReference>
<dbReference type="InterPro" id="IPR002552">
    <property type="entry name" value="Spike_S2_CoV"/>
</dbReference>
<dbReference type="InterPro" id="IPR043614">
    <property type="entry name" value="Spike_S2_CoV_C"/>
</dbReference>
<dbReference type="InterPro" id="IPR044873">
    <property type="entry name" value="Spike_S2_CoV_HR1"/>
</dbReference>
<dbReference type="InterPro" id="IPR044874">
    <property type="entry name" value="Spike_S2_CoV_HR2"/>
</dbReference>
<dbReference type="Pfam" id="PF16451">
    <property type="entry name" value="bCoV_S1_N"/>
    <property type="match status" value="1"/>
</dbReference>
<dbReference type="Pfam" id="PF09408">
    <property type="entry name" value="bCoV_S1_RBD"/>
    <property type="match status" value="1"/>
</dbReference>
<dbReference type="Pfam" id="PF19209">
    <property type="entry name" value="CoV_S1_C"/>
    <property type="match status" value="1"/>
</dbReference>
<dbReference type="Pfam" id="PF01601">
    <property type="entry name" value="CoV_S2"/>
    <property type="match status" value="1"/>
</dbReference>
<dbReference type="Pfam" id="PF19214">
    <property type="entry name" value="CoV_S2_C"/>
    <property type="match status" value="1"/>
</dbReference>
<dbReference type="SUPFAM" id="SSF111474">
    <property type="entry name" value="Coronavirus S2 glycoprotein"/>
    <property type="match status" value="2"/>
</dbReference>
<dbReference type="SUPFAM" id="SSF143587">
    <property type="entry name" value="SARS receptor-binding domain-like"/>
    <property type="match status" value="1"/>
</dbReference>
<dbReference type="PROSITE" id="PS51921">
    <property type="entry name" value="BCOV_S1_CTD"/>
    <property type="match status" value="1"/>
</dbReference>
<dbReference type="PROSITE" id="PS51922">
    <property type="entry name" value="BCOV_S1_NTD"/>
    <property type="match status" value="1"/>
</dbReference>
<dbReference type="PROSITE" id="PS51923">
    <property type="entry name" value="COV_S2_HR1"/>
    <property type="match status" value="1"/>
</dbReference>
<dbReference type="PROSITE" id="PS51924">
    <property type="entry name" value="COV_S2_HR2"/>
    <property type="match status" value="1"/>
</dbReference>
<organism>
    <name type="scientific">Human coronavirus HKU1 (isolate N5)</name>
    <name type="common">HCoV-HKU1</name>
    <dbReference type="NCBI Taxonomy" id="443241"/>
    <lineage>
        <taxon>Viruses</taxon>
        <taxon>Riboviria</taxon>
        <taxon>Orthornavirae</taxon>
        <taxon>Pisuviricota</taxon>
        <taxon>Pisoniviricetes</taxon>
        <taxon>Nidovirales</taxon>
        <taxon>Cornidovirineae</taxon>
        <taxon>Coronaviridae</taxon>
        <taxon>Orthocoronavirinae</taxon>
        <taxon>Betacoronavirus</taxon>
        <taxon>Embecovirus</taxon>
        <taxon>Human coronavirus HKU1</taxon>
    </lineage>
</organism>
<comment type="function">
    <molecule>Spike protein S1</molecule>
    <text evidence="2">Attaches the virion to the cell membrane by interacting with host receptor, initiating the infection.</text>
</comment>
<comment type="function">
    <molecule>Spike protein S2</molecule>
    <text evidence="2">Mediates fusion of the virion and cellular membranes by acting as a class I viral fusion protein. Under the current model, the protein has at least three conformational states: pre-fusion native state, pre-hairpin intermediate state, and post-fusion hairpin state. During viral and target cell membrane fusion, the coiled coil regions (heptad repeats) assume a trimer-of-hairpins structure, positioning the fusion peptide in close proximity to the C-terminal region of the ectodomain. The formation of this structure appears to drive apposition and subsequent fusion of viral and target cell membranes.</text>
</comment>
<comment type="function">
    <molecule>Spike protein S2'</molecule>
    <text evidence="2">Acts as a viral fusion peptide which is unmasked following S2 cleavage occurring upon virus endocytosis.</text>
</comment>
<comment type="subunit">
    <text evidence="2">Homotrimer; each monomer consists of a S1 and a S2 subunit. The resulting peplomers protrude from the virus surface as spikes.</text>
</comment>
<comment type="interaction">
    <interactant intactId="EBI-16201169">
        <id>Q0ZME7</id>
    </interactant>
    <interactant intactId="EBI-16201169">
        <id>Q0ZME7</id>
        <label>S</label>
    </interactant>
    <organismsDiffer>false</organismsDiffer>
    <experiments>2</experiments>
</comment>
<comment type="subcellular location">
    <subcellularLocation>
        <location evidence="2">Virion membrane</location>
        <topology evidence="2">Single-pass type I membrane protein</topology>
    </subcellularLocation>
    <subcellularLocation>
        <location evidence="2">Host endoplasmic reticulum-Golgi intermediate compartment membrane</location>
        <topology evidence="2">Single-pass type I membrane protein</topology>
    </subcellularLocation>
    <subcellularLocation>
        <location evidence="2">Host cell membrane</location>
        <topology evidence="2">Single-pass type I membrane protein</topology>
    </subcellularLocation>
    <text evidence="2">Accumulates in the endoplasmic reticulum-Golgi intermediate compartment, where it participates in virus particle assembly. Some S oligomers are transported to the host plasma membrane, where they may mediate cell-cell fusion.</text>
</comment>
<comment type="domain">
    <text evidence="2">Fusion peptide 1 (FP1) and fusion peptide 2 (FP2) function cooperatively and have a membrane-ordering effect on lipid headgroups and shallow hydrophobic regions of target bilayers. They are considered as two domains of an extended, bipartite FP. The membrane-ordering activity is calcium-dependent and also dependent on correct folding, which is maintained by an internal disulfide bond in FP2.</text>
</comment>
<comment type="PTM">
    <text evidence="2">Specific enzymatic cleavages in vivo yield mature proteins. The precursor is processed into S1 and S2 by host cell furin or another cellular protease to yield the mature S1 and S2 proteins. Additionally, a second cleavage leads to the release of a fusion peptide after viral attachment to host cell receptor.</text>
</comment>
<comment type="PTM">
    <text evidence="2">The cytoplasmic Cys-rich domain is palmitoylated. Spike glycoprotein is digested within host endosomes.</text>
</comment>
<comment type="miscellaneous">
    <text>Isolate N5 belongs to genotype C. Genotype C probably arose from recombination between genotypes A and B.</text>
</comment>
<comment type="similarity">
    <text evidence="2">Belongs to the betacoronaviruses spike protein family.</text>
</comment>
<organismHost>
    <name type="scientific">Homo sapiens</name>
    <name type="common">Human</name>
    <dbReference type="NCBI Taxonomy" id="9606"/>
</organismHost>
<name>SPIKE_CVHN5</name>
<proteinExistence type="evidence at protein level"/>
<gene>
    <name evidence="2" type="primary">S</name>
    <name type="ORF">3</name>
</gene>
<accession>Q0ZME7</accession>
<evidence type="ECO:0000250" key="1"/>
<evidence type="ECO:0000255" key="2">
    <source>
        <dbReference type="HAMAP-Rule" id="MF_04099"/>
    </source>
</evidence>
<evidence type="ECO:0000255" key="3">
    <source>
        <dbReference type="PROSITE-ProRule" id="PRU01269"/>
    </source>
</evidence>
<evidence type="ECO:0000255" key="4">
    <source>
        <dbReference type="PROSITE-ProRule" id="PRU01270"/>
    </source>
</evidence>
<evidence type="ECO:0007829" key="5">
    <source>
        <dbReference type="PDB" id="8Y87"/>
    </source>
</evidence>
<evidence type="ECO:0007829" key="6">
    <source>
        <dbReference type="PDB" id="8Y88"/>
    </source>
</evidence>
<evidence type="ECO:0007829" key="7">
    <source>
        <dbReference type="PDB" id="8Y89"/>
    </source>
</evidence>
<evidence type="ECO:0007829" key="8">
    <source>
        <dbReference type="PDB" id="8Y8A"/>
    </source>
</evidence>
<evidence type="ECO:0007829" key="9">
    <source>
        <dbReference type="PDB" id="8Y8B"/>
    </source>
</evidence>
<evidence type="ECO:0007829" key="10">
    <source>
        <dbReference type="PDB" id="8Y8C"/>
    </source>
</evidence>
<evidence type="ECO:0007829" key="11">
    <source>
        <dbReference type="PDB" id="8Y8F"/>
    </source>
</evidence>